<organism>
    <name type="scientific">Pyricularia oryzae</name>
    <name type="common">Rice blast fungus</name>
    <name type="synonym">Magnaporthe oryzae</name>
    <dbReference type="NCBI Taxonomy" id="318829"/>
    <lineage>
        <taxon>Eukaryota</taxon>
        <taxon>Fungi</taxon>
        <taxon>Dikarya</taxon>
        <taxon>Ascomycota</taxon>
        <taxon>Pezizomycotina</taxon>
        <taxon>Sordariomycetes</taxon>
        <taxon>Sordariomycetidae</taxon>
        <taxon>Magnaporthales</taxon>
        <taxon>Pyriculariaceae</taxon>
        <taxon>Pyricularia</taxon>
    </lineage>
</organism>
<gene>
    <name evidence="5" type="primary">MST12</name>
</gene>
<sequence>MYSHPHNAGVAAAPQKPETFMLSTEAQQALPHDAQVALQQVDNLKYFLISAPVDWQPDQYIRRFLLPTGEYVSCVLWNNLFHISGTDIVRCLSFRFQAFGRPVKNSKKFEEGIFSDLRNLKSGTDASLEEPKSPFLDFLYKNNCIRTQKKQKVFYWYSVPHDRLFLDALERDLKREKMGQEATTMAVSEPALSFQYDSSQSLYEQLTKAQQANSSSFNAQQVSFPPSQSTSPVMRAMDSMPPPPQMMPQPMPQSMAPLADGLDAMVPYAAMGMAPGMPPQPAVKREPDFNRVQYNQNGVPINQGHQRHASMPAYGLEYSPAPSFVSSHYDDYGNRGISFEPLTPPQQAMGMGAEPAYIANEETGLYTAIPDHMNGVNGLNGMIQLPPSNLAGPQFTRSYGSNNVYSVIEGSPTYKQRRRRSSIPPGMSAIAAATAAATAAHRPSDLRRSVSASVGPVAEGDESLDNSPPGLIYSNQPMSMANHQREAMEQMSRHGTPLSTVEGSPGMHNVNLEQQQYPMPSEDMTSPMDDRSRPMAQGGPSVVRRARSATVMGSEVGPYPQKSHSCPIPTCGRLFKRLEHLKRHVRTHTQERPYICPYCSKAFSRSDNLAQHKRTHDRADGGEGLILSGEDEEEYSGDDHLGSLEEASPTSEGGYVTSSLNSAMAHSNTSQHPGSNAVSPNPGPMSHAPTYNSMQTLMQPMQMSQPQPINAGGMM</sequence>
<protein>
    <recommendedName>
        <fullName evidence="5">Transcription factor MST12</fullName>
    </recommendedName>
</protein>
<feature type="chain" id="PRO_0000453101" description="Transcription factor MST12">
    <location>
        <begin position="1"/>
        <end position="715"/>
    </location>
</feature>
<feature type="zinc finger region" description="C2H2-type 1" evidence="1">
    <location>
        <begin position="564"/>
        <end position="588"/>
    </location>
</feature>
<feature type="zinc finger region" description="C2H2-type 2" evidence="1">
    <location>
        <begin position="594"/>
        <end position="616"/>
    </location>
</feature>
<feature type="region of interest" description="Disordered" evidence="2">
    <location>
        <begin position="214"/>
        <end position="243"/>
    </location>
</feature>
<feature type="region of interest" description="Disordered" evidence="2">
    <location>
        <begin position="439"/>
        <end position="469"/>
    </location>
</feature>
<feature type="region of interest" description="Disordered" evidence="2">
    <location>
        <begin position="518"/>
        <end position="539"/>
    </location>
</feature>
<feature type="region of interest" description="Disordered" evidence="2">
    <location>
        <begin position="632"/>
        <end position="691"/>
    </location>
</feature>
<feature type="compositionally biased region" description="Low complexity" evidence="2">
    <location>
        <begin position="214"/>
        <end position="224"/>
    </location>
</feature>
<feature type="compositionally biased region" description="Polar residues" evidence="2">
    <location>
        <begin position="648"/>
        <end position="679"/>
    </location>
</feature>
<comment type="function">
    <text evidence="3 4">Transcription factor that may function downstream of PMK1 to regulate genes involved in infectious hyphae growth (PubMed:11952120). Is not essential for vegetative growth, conidiation or appressorium formation (PubMed:11952120). May be involved in the regulation of the expression of the cell surface sensor MSB2 (PubMed:21283781).</text>
</comment>
<comment type="subcellular location">
    <subcellularLocation>
        <location evidence="6">Nucleus</location>
    </subcellularLocation>
</comment>
<comment type="disruption phenotype">
    <text evidence="3 4">Impairs pathogenicity on rice and barley leaves but does not affect appressorium formation (PubMed:11952120). However, fails to penetrate onion epidermal cells and to cause spreading lesions (PubMed:11952120). Reduces significantly the expression of the cell surface sensor MSB2 (PubMed:21283781).</text>
</comment>
<comment type="similarity">
    <text evidence="6">Belongs to the STE12 transcription factor family.</text>
</comment>
<name>MST12_PYROR</name>
<proteinExistence type="inferred from homology"/>
<reference key="1">
    <citation type="journal article" date="2002" name="Mol. Plant Microbe Interact.">
        <title>MST12 regulates infectious growth but not appressorium formation in the rice blast fungus Magnaporthe grisea.</title>
        <authorList>
            <person name="Park G."/>
            <person name="Xue C."/>
            <person name="Zheng L."/>
            <person name="Lam S."/>
            <person name="Xu J.R."/>
        </authorList>
    </citation>
    <scope>NUCLEOTIDE SEQUENCE [GENOMIC DNA]</scope>
    <scope>FUNCTION</scope>
    <scope>DISRUPTION PHENOTYPE</scope>
    <source>
        <strain>Guyane 11</strain>
    </source>
</reference>
<reference key="2">
    <citation type="journal article" date="2011" name="PLoS Pathog.">
        <title>Multiple plant surface signals are sensed by different mechanisms in the rice blast fungus for appressorium formation.</title>
        <authorList>
            <person name="Liu W."/>
            <person name="Zhou X."/>
            <person name="Li G."/>
            <person name="Li L."/>
            <person name="Kong L."/>
            <person name="Wang C."/>
            <person name="Zhang H."/>
            <person name="Xu J.R."/>
        </authorList>
    </citation>
    <scope>FUNCTION</scope>
    <scope>DISRUPTION PHENOTYPE</scope>
</reference>
<keyword id="KW-0479">Metal-binding</keyword>
<keyword id="KW-0539">Nucleus</keyword>
<keyword id="KW-0677">Repeat</keyword>
<keyword id="KW-0804">Transcription</keyword>
<keyword id="KW-0805">Transcription regulation</keyword>
<keyword id="KW-0843">Virulence</keyword>
<keyword id="KW-0862">Zinc</keyword>
<keyword id="KW-0863">Zinc-finger</keyword>
<dbReference type="EMBL" id="AF432913">
    <property type="protein sequence ID" value="AAL27626.2"/>
    <property type="molecule type" value="Genomic_DNA"/>
</dbReference>
<dbReference type="SMR" id="Q96UQ9"/>
<dbReference type="OMA" id="EMSRHGT"/>
<dbReference type="PHI-base" id="PHI:268"/>
<dbReference type="GO" id="GO:0005634">
    <property type="term" value="C:nucleus"/>
    <property type="evidence" value="ECO:0007669"/>
    <property type="project" value="UniProtKB-SubCell"/>
</dbReference>
<dbReference type="GO" id="GO:1990526">
    <property type="term" value="C:Ste12p-Dig1p-Dig2p complex"/>
    <property type="evidence" value="ECO:0007669"/>
    <property type="project" value="TreeGrafter"/>
</dbReference>
<dbReference type="GO" id="GO:1990527">
    <property type="term" value="C:Tec1p-Ste12p-Dig1p complex"/>
    <property type="evidence" value="ECO:0007669"/>
    <property type="project" value="TreeGrafter"/>
</dbReference>
<dbReference type="GO" id="GO:0003700">
    <property type="term" value="F:DNA-binding transcription factor activity"/>
    <property type="evidence" value="ECO:0007669"/>
    <property type="project" value="InterPro"/>
</dbReference>
<dbReference type="GO" id="GO:0008270">
    <property type="term" value="F:zinc ion binding"/>
    <property type="evidence" value="ECO:0007669"/>
    <property type="project" value="UniProtKB-KW"/>
</dbReference>
<dbReference type="GO" id="GO:0019953">
    <property type="term" value="P:sexual reproduction"/>
    <property type="evidence" value="ECO:0007669"/>
    <property type="project" value="TreeGrafter"/>
</dbReference>
<dbReference type="FunFam" id="3.30.160.60:FF:000243">
    <property type="entry name" value="Probable transcription factor steA"/>
    <property type="match status" value="1"/>
</dbReference>
<dbReference type="FunFam" id="3.30.160.60:FF:000390">
    <property type="entry name" value="Transcription factor stea"/>
    <property type="match status" value="1"/>
</dbReference>
<dbReference type="Gene3D" id="3.30.160.60">
    <property type="entry name" value="Classic Zinc Finger"/>
    <property type="match status" value="2"/>
</dbReference>
<dbReference type="InterPro" id="IPR003120">
    <property type="entry name" value="Ste12"/>
</dbReference>
<dbReference type="InterPro" id="IPR052127">
    <property type="entry name" value="STE12_transcription_factor"/>
</dbReference>
<dbReference type="InterPro" id="IPR036236">
    <property type="entry name" value="Znf_C2H2_sf"/>
</dbReference>
<dbReference type="InterPro" id="IPR013087">
    <property type="entry name" value="Znf_C2H2_type"/>
</dbReference>
<dbReference type="PANTHER" id="PTHR47427">
    <property type="entry name" value="PROTEIN STE12"/>
    <property type="match status" value="1"/>
</dbReference>
<dbReference type="PANTHER" id="PTHR47427:SF1">
    <property type="entry name" value="PROTEIN STE12"/>
    <property type="match status" value="1"/>
</dbReference>
<dbReference type="Pfam" id="PF02200">
    <property type="entry name" value="STE"/>
    <property type="match status" value="1"/>
</dbReference>
<dbReference type="Pfam" id="PF00096">
    <property type="entry name" value="zf-C2H2"/>
    <property type="match status" value="2"/>
</dbReference>
<dbReference type="SMART" id="SM00424">
    <property type="entry name" value="STE"/>
    <property type="match status" value="1"/>
</dbReference>
<dbReference type="SMART" id="SM00355">
    <property type="entry name" value="ZnF_C2H2"/>
    <property type="match status" value="2"/>
</dbReference>
<dbReference type="SUPFAM" id="SSF57667">
    <property type="entry name" value="beta-beta-alpha zinc fingers"/>
    <property type="match status" value="1"/>
</dbReference>
<dbReference type="PROSITE" id="PS00028">
    <property type="entry name" value="ZINC_FINGER_C2H2_1"/>
    <property type="match status" value="2"/>
</dbReference>
<dbReference type="PROSITE" id="PS50157">
    <property type="entry name" value="ZINC_FINGER_C2H2_2"/>
    <property type="match status" value="2"/>
</dbReference>
<evidence type="ECO:0000255" key="1">
    <source>
        <dbReference type="PROSITE-ProRule" id="PRU00042"/>
    </source>
</evidence>
<evidence type="ECO:0000256" key="2">
    <source>
        <dbReference type="SAM" id="MobiDB-lite"/>
    </source>
</evidence>
<evidence type="ECO:0000269" key="3">
    <source>
    </source>
</evidence>
<evidence type="ECO:0000269" key="4">
    <source>
    </source>
</evidence>
<evidence type="ECO:0000303" key="5">
    <source>
    </source>
</evidence>
<evidence type="ECO:0000305" key="6"/>
<accession>Q96UQ9</accession>